<keyword id="KW-0004">4Fe-4S</keyword>
<keyword id="KW-0997">Cell inner membrane</keyword>
<keyword id="KW-1003">Cell membrane</keyword>
<keyword id="KW-0408">Iron</keyword>
<keyword id="KW-0411">Iron-sulfur</keyword>
<keyword id="KW-0472">Membrane</keyword>
<keyword id="KW-0479">Metal-binding</keyword>
<keyword id="KW-0520">NAD</keyword>
<keyword id="KW-0874">Quinone</keyword>
<keyword id="KW-1185">Reference proteome</keyword>
<keyword id="KW-1278">Translocase</keyword>
<keyword id="KW-0813">Transport</keyword>
<keyword id="KW-0830">Ubiquinone</keyword>
<name>NUOB_GEOUR</name>
<feature type="chain" id="PRO_0000376243" description="NADH-quinone oxidoreductase subunit B">
    <location>
        <begin position="1"/>
        <end position="170"/>
    </location>
</feature>
<feature type="binding site" evidence="1">
    <location>
        <position position="37"/>
    </location>
    <ligand>
        <name>[4Fe-4S] cluster</name>
        <dbReference type="ChEBI" id="CHEBI:49883"/>
    </ligand>
</feature>
<feature type="binding site" evidence="1">
    <location>
        <position position="38"/>
    </location>
    <ligand>
        <name>[4Fe-4S] cluster</name>
        <dbReference type="ChEBI" id="CHEBI:49883"/>
    </ligand>
</feature>
<feature type="binding site" evidence="1">
    <location>
        <position position="102"/>
    </location>
    <ligand>
        <name>[4Fe-4S] cluster</name>
        <dbReference type="ChEBI" id="CHEBI:49883"/>
    </ligand>
</feature>
<feature type="binding site" evidence="1">
    <location>
        <position position="131"/>
    </location>
    <ligand>
        <name>[4Fe-4S] cluster</name>
        <dbReference type="ChEBI" id="CHEBI:49883"/>
    </ligand>
</feature>
<sequence>MGVEQPLGDNIVTASLDGLVNWARKSSIWPMTFGLACCAIEMMATGAAKHDLDRFGIIFRASPRQSDCIIIAGTVTKKMLPVIKTVYEQMPEPKWVIAMGACACSGGVFDTYSVVQGVDEALPVDVYIPGCPPRPEALLYGLMKLQDKIGKERNSFGSAIGLGDRLEPAA</sequence>
<comment type="function">
    <text evidence="1">NDH-1 shuttles electrons from NADH, via FMN and iron-sulfur (Fe-S) centers, to quinones in the respiratory chain. The immediate electron acceptor for the enzyme in this species is believed to be ubiquinone. Couples the redox reaction to proton translocation (for every two electrons transferred, four hydrogen ions are translocated across the cytoplasmic membrane), and thus conserves the redox energy in a proton gradient.</text>
</comment>
<comment type="catalytic activity">
    <reaction evidence="1">
        <text>a quinone + NADH + 5 H(+)(in) = a quinol + NAD(+) + 4 H(+)(out)</text>
        <dbReference type="Rhea" id="RHEA:57888"/>
        <dbReference type="ChEBI" id="CHEBI:15378"/>
        <dbReference type="ChEBI" id="CHEBI:24646"/>
        <dbReference type="ChEBI" id="CHEBI:57540"/>
        <dbReference type="ChEBI" id="CHEBI:57945"/>
        <dbReference type="ChEBI" id="CHEBI:132124"/>
    </reaction>
</comment>
<comment type="cofactor">
    <cofactor evidence="1">
        <name>[4Fe-4S] cluster</name>
        <dbReference type="ChEBI" id="CHEBI:49883"/>
    </cofactor>
    <text evidence="1">Binds 1 [4Fe-4S] cluster.</text>
</comment>
<comment type="subunit">
    <text evidence="1">NDH-1 is composed of 14 different subunits. Subunits NuoB, C, D, E, F, and G constitute the peripheral sector of the complex.</text>
</comment>
<comment type="subcellular location">
    <subcellularLocation>
        <location evidence="1">Cell inner membrane</location>
        <topology evidence="1">Peripheral membrane protein</topology>
        <orientation evidence="1">Cytoplasmic side</orientation>
    </subcellularLocation>
</comment>
<comment type="similarity">
    <text evidence="1">Belongs to the complex I 20 kDa subunit family.</text>
</comment>
<evidence type="ECO:0000255" key="1">
    <source>
        <dbReference type="HAMAP-Rule" id="MF_01356"/>
    </source>
</evidence>
<protein>
    <recommendedName>
        <fullName evidence="1">NADH-quinone oxidoreductase subunit B</fullName>
        <ecNumber evidence="1">7.1.1.-</ecNumber>
    </recommendedName>
    <alternativeName>
        <fullName evidence="1">NADH dehydrogenase I subunit B</fullName>
    </alternativeName>
    <alternativeName>
        <fullName evidence="1">NDH-1 subunit B</fullName>
    </alternativeName>
</protein>
<accession>A5G9B8</accession>
<gene>
    <name evidence="1" type="primary">nuoB</name>
    <name type="ordered locus">Gura_4243</name>
</gene>
<organism>
    <name type="scientific">Geotalea uraniireducens (strain Rf4)</name>
    <name type="common">Geobacter uraniireducens</name>
    <dbReference type="NCBI Taxonomy" id="351605"/>
    <lineage>
        <taxon>Bacteria</taxon>
        <taxon>Pseudomonadati</taxon>
        <taxon>Thermodesulfobacteriota</taxon>
        <taxon>Desulfuromonadia</taxon>
        <taxon>Geobacterales</taxon>
        <taxon>Geobacteraceae</taxon>
        <taxon>Geotalea</taxon>
    </lineage>
</organism>
<proteinExistence type="inferred from homology"/>
<dbReference type="EC" id="7.1.1.-" evidence="1"/>
<dbReference type="EMBL" id="CP000698">
    <property type="protein sequence ID" value="ABQ28386.1"/>
    <property type="molecule type" value="Genomic_DNA"/>
</dbReference>
<dbReference type="RefSeq" id="WP_011941017.1">
    <property type="nucleotide sequence ID" value="NC_009483.1"/>
</dbReference>
<dbReference type="SMR" id="A5G9B8"/>
<dbReference type="STRING" id="351605.Gura_4243"/>
<dbReference type="KEGG" id="gur:Gura_4243"/>
<dbReference type="HOGENOM" id="CLU_055737_7_3_7"/>
<dbReference type="OrthoDB" id="9786737at2"/>
<dbReference type="Proteomes" id="UP000006695">
    <property type="component" value="Chromosome"/>
</dbReference>
<dbReference type="GO" id="GO:0005886">
    <property type="term" value="C:plasma membrane"/>
    <property type="evidence" value="ECO:0007669"/>
    <property type="project" value="UniProtKB-SubCell"/>
</dbReference>
<dbReference type="GO" id="GO:0045271">
    <property type="term" value="C:respiratory chain complex I"/>
    <property type="evidence" value="ECO:0007669"/>
    <property type="project" value="TreeGrafter"/>
</dbReference>
<dbReference type="GO" id="GO:0051539">
    <property type="term" value="F:4 iron, 4 sulfur cluster binding"/>
    <property type="evidence" value="ECO:0007669"/>
    <property type="project" value="UniProtKB-KW"/>
</dbReference>
<dbReference type="GO" id="GO:0005506">
    <property type="term" value="F:iron ion binding"/>
    <property type="evidence" value="ECO:0007669"/>
    <property type="project" value="UniProtKB-UniRule"/>
</dbReference>
<dbReference type="GO" id="GO:0008137">
    <property type="term" value="F:NADH dehydrogenase (ubiquinone) activity"/>
    <property type="evidence" value="ECO:0007669"/>
    <property type="project" value="InterPro"/>
</dbReference>
<dbReference type="GO" id="GO:0050136">
    <property type="term" value="F:NADH:ubiquinone reductase (non-electrogenic) activity"/>
    <property type="evidence" value="ECO:0007669"/>
    <property type="project" value="UniProtKB-UniRule"/>
</dbReference>
<dbReference type="GO" id="GO:0048038">
    <property type="term" value="F:quinone binding"/>
    <property type="evidence" value="ECO:0007669"/>
    <property type="project" value="UniProtKB-KW"/>
</dbReference>
<dbReference type="GO" id="GO:0009060">
    <property type="term" value="P:aerobic respiration"/>
    <property type="evidence" value="ECO:0007669"/>
    <property type="project" value="TreeGrafter"/>
</dbReference>
<dbReference type="GO" id="GO:0015990">
    <property type="term" value="P:electron transport coupled proton transport"/>
    <property type="evidence" value="ECO:0007669"/>
    <property type="project" value="TreeGrafter"/>
</dbReference>
<dbReference type="FunFam" id="3.40.50.12280:FF:000002">
    <property type="entry name" value="NADH-quinone oxidoreductase subunit B"/>
    <property type="match status" value="1"/>
</dbReference>
<dbReference type="Gene3D" id="3.40.50.12280">
    <property type="match status" value="1"/>
</dbReference>
<dbReference type="HAMAP" id="MF_01356">
    <property type="entry name" value="NDH1_NuoB"/>
    <property type="match status" value="1"/>
</dbReference>
<dbReference type="InterPro" id="IPR006137">
    <property type="entry name" value="NADH_UbQ_OxRdtase-like_20kDa"/>
</dbReference>
<dbReference type="InterPro" id="IPR006138">
    <property type="entry name" value="NADH_UQ_OxRdtase_20Kd_su"/>
</dbReference>
<dbReference type="NCBIfam" id="TIGR01957">
    <property type="entry name" value="nuoB_fam"/>
    <property type="match status" value="1"/>
</dbReference>
<dbReference type="NCBIfam" id="NF005012">
    <property type="entry name" value="PRK06411.1"/>
    <property type="match status" value="1"/>
</dbReference>
<dbReference type="PANTHER" id="PTHR11995">
    <property type="entry name" value="NADH DEHYDROGENASE"/>
    <property type="match status" value="1"/>
</dbReference>
<dbReference type="PANTHER" id="PTHR11995:SF14">
    <property type="entry name" value="NADH DEHYDROGENASE [UBIQUINONE] IRON-SULFUR PROTEIN 7, MITOCHONDRIAL"/>
    <property type="match status" value="1"/>
</dbReference>
<dbReference type="Pfam" id="PF01058">
    <property type="entry name" value="Oxidored_q6"/>
    <property type="match status" value="1"/>
</dbReference>
<dbReference type="SUPFAM" id="SSF56770">
    <property type="entry name" value="HydA/Nqo6-like"/>
    <property type="match status" value="1"/>
</dbReference>
<reference key="1">
    <citation type="submission" date="2007-05" db="EMBL/GenBank/DDBJ databases">
        <title>Complete sequence of Geobacter uraniireducens Rf4.</title>
        <authorList>
            <consortium name="US DOE Joint Genome Institute"/>
            <person name="Copeland A."/>
            <person name="Lucas S."/>
            <person name="Lapidus A."/>
            <person name="Barry K."/>
            <person name="Detter J.C."/>
            <person name="Glavina del Rio T."/>
            <person name="Hammon N."/>
            <person name="Israni S."/>
            <person name="Dalin E."/>
            <person name="Tice H."/>
            <person name="Pitluck S."/>
            <person name="Chertkov O."/>
            <person name="Brettin T."/>
            <person name="Bruce D."/>
            <person name="Han C."/>
            <person name="Schmutz J."/>
            <person name="Larimer F."/>
            <person name="Land M."/>
            <person name="Hauser L."/>
            <person name="Kyrpides N."/>
            <person name="Mikhailova N."/>
            <person name="Shelobolina E."/>
            <person name="Aklujkar M."/>
            <person name="Lovley D."/>
            <person name="Richardson P."/>
        </authorList>
    </citation>
    <scope>NUCLEOTIDE SEQUENCE [LARGE SCALE GENOMIC DNA]</scope>
    <source>
        <strain>ATCC BAA-1134 / JCM 13001 / Rf4</strain>
    </source>
</reference>